<protein>
    <recommendedName>
        <fullName evidence="1">ATP-dependent protease ATPase subunit HslU</fullName>
    </recommendedName>
    <alternativeName>
        <fullName evidence="1">Unfoldase HslU</fullName>
    </alternativeName>
</protein>
<accession>B1YIA9</accession>
<comment type="function">
    <text evidence="1">ATPase subunit of a proteasome-like degradation complex; this subunit has chaperone activity. The binding of ATP and its subsequent hydrolysis by HslU are essential for unfolding of protein substrates subsequently hydrolyzed by HslV. HslU recognizes the N-terminal part of its protein substrates and unfolds these before they are guided to HslV for hydrolysis.</text>
</comment>
<comment type="subunit">
    <text evidence="1">A double ring-shaped homohexamer of HslV is capped on each side by a ring-shaped HslU homohexamer. The assembly of the HslU/HslV complex is dependent on binding of ATP.</text>
</comment>
<comment type="subcellular location">
    <subcellularLocation>
        <location evidence="1">Cytoplasm</location>
    </subcellularLocation>
</comment>
<comment type="similarity">
    <text evidence="1">Belongs to the ClpX chaperone family. HslU subfamily.</text>
</comment>
<keyword id="KW-0067">ATP-binding</keyword>
<keyword id="KW-0143">Chaperone</keyword>
<keyword id="KW-0963">Cytoplasm</keyword>
<keyword id="KW-0547">Nucleotide-binding</keyword>
<keyword id="KW-1185">Reference proteome</keyword>
<keyword id="KW-0346">Stress response</keyword>
<feature type="chain" id="PRO_1000100949" description="ATP-dependent protease ATPase subunit HslU">
    <location>
        <begin position="1"/>
        <end position="456"/>
    </location>
</feature>
<feature type="binding site" evidence="1">
    <location>
        <position position="18"/>
    </location>
    <ligand>
        <name>ATP</name>
        <dbReference type="ChEBI" id="CHEBI:30616"/>
    </ligand>
</feature>
<feature type="binding site" evidence="1">
    <location>
        <begin position="60"/>
        <end position="65"/>
    </location>
    <ligand>
        <name>ATP</name>
        <dbReference type="ChEBI" id="CHEBI:30616"/>
    </ligand>
</feature>
<feature type="binding site" evidence="1">
    <location>
        <position position="270"/>
    </location>
    <ligand>
        <name>ATP</name>
        <dbReference type="ChEBI" id="CHEBI:30616"/>
    </ligand>
</feature>
<feature type="binding site" evidence="1">
    <location>
        <position position="334"/>
    </location>
    <ligand>
        <name>ATP</name>
        <dbReference type="ChEBI" id="CHEBI:30616"/>
    </ligand>
</feature>
<feature type="binding site" evidence="1">
    <location>
        <position position="406"/>
    </location>
    <ligand>
        <name>ATP</name>
        <dbReference type="ChEBI" id="CHEBI:30616"/>
    </ligand>
</feature>
<sequence length="456" mass="51080">MHEFTPRQIVEKLNEHVIGQADAKRAVAIALRNRYRRQLLDPSLRDEVTPKNILMIGPTGVGKTEIARRLAKLVRAPFVKIEATKFTEVGYVGRDVESMVRDLVEASLRLVKDEKKEALKERAEAVANERIVDALVGKKASTGLGGGNPFEMLFGGTQKPPEQETANDTADRSVIRQQLFQGQLEDRMIDVDIEERQMDLFSGQQGMEGLANLQDMLGQVMPKKTKKRQLSVKEARPILTAEEAERLLDLNEVHDEAVRRAEQMGIIFVDEIDKIATKGQDSAGVSREGVQRDILPIVEGSTVVTKYGPVKTDHMLFIAAGAFHMAKPSDLIPELQGRFPIRVELDSLTEDDFVKILTEPNQALLKQYKALLGAEQVHVTFTEDAIRQIARIAAQVNDETDNIGARRLYTIMERVLEELSFEAAEMPETDVTITPQYVMDRVGKVADDRDLSQFIL</sequence>
<gene>
    <name evidence="1" type="primary">hslU</name>
    <name type="ordered locus">Exig_1884</name>
</gene>
<proteinExistence type="inferred from homology"/>
<organism>
    <name type="scientific">Exiguobacterium sibiricum (strain DSM 17290 / CCUG 55495 / CIP 109462 / JCM 13490 / 255-15)</name>
    <dbReference type="NCBI Taxonomy" id="262543"/>
    <lineage>
        <taxon>Bacteria</taxon>
        <taxon>Bacillati</taxon>
        <taxon>Bacillota</taxon>
        <taxon>Bacilli</taxon>
        <taxon>Bacillales</taxon>
        <taxon>Bacillales Family XII. Incertae Sedis</taxon>
        <taxon>Exiguobacterium</taxon>
    </lineage>
</organism>
<evidence type="ECO:0000255" key="1">
    <source>
        <dbReference type="HAMAP-Rule" id="MF_00249"/>
    </source>
</evidence>
<reference key="1">
    <citation type="submission" date="2008-04" db="EMBL/GenBank/DDBJ databases">
        <title>Complete sequence of chromosome of Exiguobacterium sibiricum 255-15.</title>
        <authorList>
            <consortium name="US DOE Joint Genome Institute"/>
            <person name="Copeland A."/>
            <person name="Lucas S."/>
            <person name="Lapidus A."/>
            <person name="Glavina del Rio T."/>
            <person name="Dalin E."/>
            <person name="Tice H."/>
            <person name="Bruce D."/>
            <person name="Goodwin L."/>
            <person name="Pitluck S."/>
            <person name="Kiss H."/>
            <person name="Chertkov O."/>
            <person name="Monk C."/>
            <person name="Brettin T."/>
            <person name="Detter J.C."/>
            <person name="Han C."/>
            <person name="Kuske C.R."/>
            <person name="Schmutz J."/>
            <person name="Larimer F."/>
            <person name="Land M."/>
            <person name="Hauser L."/>
            <person name="Kyrpides N."/>
            <person name="Mikhailova N."/>
            <person name="Vishnivetskaya T."/>
            <person name="Rodrigues D.F."/>
            <person name="Gilichinsky D."/>
            <person name="Tiedje J."/>
            <person name="Richardson P."/>
        </authorList>
    </citation>
    <scope>NUCLEOTIDE SEQUENCE [LARGE SCALE GENOMIC DNA]</scope>
    <source>
        <strain>DSM 17290 / CCUG 55495 / CIP 109462 / JCM 13490 / 255-15</strain>
    </source>
</reference>
<dbReference type="EMBL" id="CP001022">
    <property type="protein sequence ID" value="ACB61336.1"/>
    <property type="molecule type" value="Genomic_DNA"/>
</dbReference>
<dbReference type="RefSeq" id="WP_012370754.1">
    <property type="nucleotide sequence ID" value="NC_010556.1"/>
</dbReference>
<dbReference type="SMR" id="B1YIA9"/>
<dbReference type="STRING" id="262543.Exig_1884"/>
<dbReference type="KEGG" id="esi:Exig_1884"/>
<dbReference type="eggNOG" id="COG1220">
    <property type="taxonomic scope" value="Bacteria"/>
</dbReference>
<dbReference type="HOGENOM" id="CLU_033123_0_0_9"/>
<dbReference type="OrthoDB" id="9804062at2"/>
<dbReference type="Proteomes" id="UP000001681">
    <property type="component" value="Chromosome"/>
</dbReference>
<dbReference type="GO" id="GO:0009376">
    <property type="term" value="C:HslUV protease complex"/>
    <property type="evidence" value="ECO:0007669"/>
    <property type="project" value="UniProtKB-UniRule"/>
</dbReference>
<dbReference type="GO" id="GO:0005524">
    <property type="term" value="F:ATP binding"/>
    <property type="evidence" value="ECO:0007669"/>
    <property type="project" value="UniProtKB-UniRule"/>
</dbReference>
<dbReference type="GO" id="GO:0016887">
    <property type="term" value="F:ATP hydrolysis activity"/>
    <property type="evidence" value="ECO:0007669"/>
    <property type="project" value="InterPro"/>
</dbReference>
<dbReference type="GO" id="GO:0008233">
    <property type="term" value="F:peptidase activity"/>
    <property type="evidence" value="ECO:0007669"/>
    <property type="project" value="InterPro"/>
</dbReference>
<dbReference type="GO" id="GO:0036402">
    <property type="term" value="F:proteasome-activating activity"/>
    <property type="evidence" value="ECO:0007669"/>
    <property type="project" value="UniProtKB-UniRule"/>
</dbReference>
<dbReference type="GO" id="GO:0043335">
    <property type="term" value="P:protein unfolding"/>
    <property type="evidence" value="ECO:0007669"/>
    <property type="project" value="UniProtKB-UniRule"/>
</dbReference>
<dbReference type="GO" id="GO:0051603">
    <property type="term" value="P:proteolysis involved in protein catabolic process"/>
    <property type="evidence" value="ECO:0007669"/>
    <property type="project" value="TreeGrafter"/>
</dbReference>
<dbReference type="CDD" id="cd19498">
    <property type="entry name" value="RecA-like_HslU"/>
    <property type="match status" value="1"/>
</dbReference>
<dbReference type="FunFam" id="3.40.50.300:FF:000220">
    <property type="entry name" value="ATP-dependent protease ATPase subunit HslU"/>
    <property type="match status" value="1"/>
</dbReference>
<dbReference type="Gene3D" id="1.10.8.60">
    <property type="match status" value="1"/>
</dbReference>
<dbReference type="Gene3D" id="3.40.50.300">
    <property type="entry name" value="P-loop containing nucleotide triphosphate hydrolases"/>
    <property type="match status" value="2"/>
</dbReference>
<dbReference type="HAMAP" id="MF_00249">
    <property type="entry name" value="HslU"/>
    <property type="match status" value="1"/>
</dbReference>
<dbReference type="InterPro" id="IPR003593">
    <property type="entry name" value="AAA+_ATPase"/>
</dbReference>
<dbReference type="InterPro" id="IPR050052">
    <property type="entry name" value="ATP-dep_Clp_protease_ClpX"/>
</dbReference>
<dbReference type="InterPro" id="IPR003959">
    <property type="entry name" value="ATPase_AAA_core"/>
</dbReference>
<dbReference type="InterPro" id="IPR019489">
    <property type="entry name" value="Clp_ATPase_C"/>
</dbReference>
<dbReference type="InterPro" id="IPR004491">
    <property type="entry name" value="HslU"/>
</dbReference>
<dbReference type="InterPro" id="IPR027417">
    <property type="entry name" value="P-loop_NTPase"/>
</dbReference>
<dbReference type="NCBIfam" id="TIGR00390">
    <property type="entry name" value="hslU"/>
    <property type="match status" value="1"/>
</dbReference>
<dbReference type="NCBIfam" id="NF003544">
    <property type="entry name" value="PRK05201.1"/>
    <property type="match status" value="1"/>
</dbReference>
<dbReference type="PANTHER" id="PTHR48102">
    <property type="entry name" value="ATP-DEPENDENT CLP PROTEASE ATP-BINDING SUBUNIT CLPX-LIKE, MITOCHONDRIAL-RELATED"/>
    <property type="match status" value="1"/>
</dbReference>
<dbReference type="PANTHER" id="PTHR48102:SF3">
    <property type="entry name" value="ATP-DEPENDENT PROTEASE ATPASE SUBUNIT HSLU"/>
    <property type="match status" value="1"/>
</dbReference>
<dbReference type="Pfam" id="PF00004">
    <property type="entry name" value="AAA"/>
    <property type="match status" value="1"/>
</dbReference>
<dbReference type="Pfam" id="PF07724">
    <property type="entry name" value="AAA_2"/>
    <property type="match status" value="1"/>
</dbReference>
<dbReference type="SMART" id="SM00382">
    <property type="entry name" value="AAA"/>
    <property type="match status" value="1"/>
</dbReference>
<dbReference type="SMART" id="SM01086">
    <property type="entry name" value="ClpB_D2-small"/>
    <property type="match status" value="1"/>
</dbReference>
<dbReference type="SUPFAM" id="SSF52540">
    <property type="entry name" value="P-loop containing nucleoside triphosphate hydrolases"/>
    <property type="match status" value="1"/>
</dbReference>
<name>HSLU_EXIS2</name>